<evidence type="ECO:0000255" key="1">
    <source>
        <dbReference type="HAMAP-Rule" id="MF_00712"/>
    </source>
</evidence>
<feature type="chain" id="PRO_1000045669" description="Probable glycine dehydrogenase (decarboxylating) subunit 1">
    <location>
        <begin position="1"/>
        <end position="444"/>
    </location>
</feature>
<accession>Q2RH48</accession>
<organism>
    <name type="scientific">Moorella thermoacetica (strain ATCC 39073 / JCM 9320)</name>
    <dbReference type="NCBI Taxonomy" id="264732"/>
    <lineage>
        <taxon>Bacteria</taxon>
        <taxon>Bacillati</taxon>
        <taxon>Bacillota</taxon>
        <taxon>Clostridia</taxon>
        <taxon>Moorellales</taxon>
        <taxon>Moorellaceae</taxon>
        <taxon>Moorella</taxon>
    </lineage>
</organism>
<comment type="function">
    <text evidence="1">The glycine cleavage system catalyzes the degradation of glycine. The P protein binds the alpha-amino group of glycine through its pyridoxal phosphate cofactor; CO(2) is released and the remaining methylamine moiety is then transferred to the lipoamide cofactor of the H protein.</text>
</comment>
<comment type="catalytic activity">
    <reaction evidence="1">
        <text>N(6)-[(R)-lipoyl]-L-lysyl-[glycine-cleavage complex H protein] + glycine + H(+) = N(6)-[(R)-S(8)-aminomethyldihydrolipoyl]-L-lysyl-[glycine-cleavage complex H protein] + CO2</text>
        <dbReference type="Rhea" id="RHEA:24304"/>
        <dbReference type="Rhea" id="RHEA-COMP:10494"/>
        <dbReference type="Rhea" id="RHEA-COMP:10495"/>
        <dbReference type="ChEBI" id="CHEBI:15378"/>
        <dbReference type="ChEBI" id="CHEBI:16526"/>
        <dbReference type="ChEBI" id="CHEBI:57305"/>
        <dbReference type="ChEBI" id="CHEBI:83099"/>
        <dbReference type="ChEBI" id="CHEBI:83143"/>
        <dbReference type="EC" id="1.4.4.2"/>
    </reaction>
</comment>
<comment type="subunit">
    <text evidence="1">The glycine cleavage system is composed of four proteins: P, T, L and H. In this organism, the P 'protein' is a heterodimer of two subunits.</text>
</comment>
<comment type="similarity">
    <text evidence="1">Belongs to the GcvP family. N-terminal subunit subfamily.</text>
</comment>
<keyword id="KW-0560">Oxidoreductase</keyword>
<protein>
    <recommendedName>
        <fullName evidence="1">Probable glycine dehydrogenase (decarboxylating) subunit 1</fullName>
        <ecNumber evidence="1">1.4.4.2</ecNumber>
    </recommendedName>
    <alternativeName>
        <fullName evidence="1">Glycine cleavage system P-protein subunit 1</fullName>
    </alternativeName>
    <alternativeName>
        <fullName evidence="1">Glycine decarboxylase subunit 1</fullName>
    </alternativeName>
    <alternativeName>
        <fullName evidence="1">Glycine dehydrogenase (aminomethyl-transferring) subunit 1</fullName>
    </alternativeName>
</protein>
<gene>
    <name evidence="1" type="primary">gcvPA</name>
    <name type="ordered locus">Moth_1943</name>
</gene>
<name>GCSPA_MOOTA</name>
<proteinExistence type="inferred from homology"/>
<dbReference type="EC" id="1.4.4.2" evidence="1"/>
<dbReference type="EMBL" id="CP000232">
    <property type="protein sequence ID" value="ABC20241.1"/>
    <property type="molecule type" value="Genomic_DNA"/>
</dbReference>
<dbReference type="RefSeq" id="YP_430784.1">
    <property type="nucleotide sequence ID" value="NC_007644.1"/>
</dbReference>
<dbReference type="SMR" id="Q2RH48"/>
<dbReference type="STRING" id="264732.Moth_1943"/>
<dbReference type="EnsemblBacteria" id="ABC20241">
    <property type="protein sequence ID" value="ABC20241"/>
    <property type="gene ID" value="Moth_1943"/>
</dbReference>
<dbReference type="KEGG" id="mta:Moth_1943"/>
<dbReference type="PATRIC" id="fig|264732.11.peg.2106"/>
<dbReference type="eggNOG" id="COG0403">
    <property type="taxonomic scope" value="Bacteria"/>
</dbReference>
<dbReference type="HOGENOM" id="CLU_004620_0_2_9"/>
<dbReference type="OrthoDB" id="9771867at2"/>
<dbReference type="GO" id="GO:0004375">
    <property type="term" value="F:glycine dehydrogenase (decarboxylating) activity"/>
    <property type="evidence" value="ECO:0007669"/>
    <property type="project" value="UniProtKB-EC"/>
</dbReference>
<dbReference type="GO" id="GO:0019464">
    <property type="term" value="P:glycine decarboxylation via glycine cleavage system"/>
    <property type="evidence" value="ECO:0007669"/>
    <property type="project" value="UniProtKB-UniRule"/>
</dbReference>
<dbReference type="GO" id="GO:0009116">
    <property type="term" value="P:nucleoside metabolic process"/>
    <property type="evidence" value="ECO:0007669"/>
    <property type="project" value="InterPro"/>
</dbReference>
<dbReference type="CDD" id="cd00613">
    <property type="entry name" value="GDC-P"/>
    <property type="match status" value="1"/>
</dbReference>
<dbReference type="Gene3D" id="3.90.1150.10">
    <property type="entry name" value="Aspartate Aminotransferase, domain 1"/>
    <property type="match status" value="1"/>
</dbReference>
<dbReference type="Gene3D" id="3.40.640.10">
    <property type="entry name" value="Type I PLP-dependent aspartate aminotransferase-like (Major domain)"/>
    <property type="match status" value="1"/>
</dbReference>
<dbReference type="HAMAP" id="MF_00712">
    <property type="entry name" value="GcvPA"/>
    <property type="match status" value="1"/>
</dbReference>
<dbReference type="InterPro" id="IPR023010">
    <property type="entry name" value="GcvPA"/>
</dbReference>
<dbReference type="InterPro" id="IPR049315">
    <property type="entry name" value="GDC-P_N"/>
</dbReference>
<dbReference type="InterPro" id="IPR020581">
    <property type="entry name" value="GDC_P"/>
</dbReference>
<dbReference type="InterPro" id="IPR015424">
    <property type="entry name" value="PyrdxlP-dep_Trfase"/>
</dbReference>
<dbReference type="InterPro" id="IPR015421">
    <property type="entry name" value="PyrdxlP-dep_Trfase_major"/>
</dbReference>
<dbReference type="InterPro" id="IPR015422">
    <property type="entry name" value="PyrdxlP-dep_Trfase_small"/>
</dbReference>
<dbReference type="NCBIfam" id="NF001696">
    <property type="entry name" value="PRK00451.1"/>
    <property type="match status" value="1"/>
</dbReference>
<dbReference type="PANTHER" id="PTHR42806">
    <property type="entry name" value="GLYCINE CLEAVAGE SYSTEM P-PROTEIN"/>
    <property type="match status" value="1"/>
</dbReference>
<dbReference type="PANTHER" id="PTHR42806:SF1">
    <property type="entry name" value="GLYCINE DEHYDROGENASE (DECARBOXYLATING)"/>
    <property type="match status" value="1"/>
</dbReference>
<dbReference type="Pfam" id="PF02347">
    <property type="entry name" value="GDC-P"/>
    <property type="match status" value="1"/>
</dbReference>
<dbReference type="PIRSF" id="PIRSF006815">
    <property type="entry name" value="GcvPA"/>
    <property type="match status" value="1"/>
</dbReference>
<dbReference type="SUPFAM" id="SSF53383">
    <property type="entry name" value="PLP-dependent transferases"/>
    <property type="match status" value="1"/>
</dbReference>
<reference key="1">
    <citation type="journal article" date="2008" name="Environ. Microbiol.">
        <title>The complete genome sequence of Moorella thermoacetica (f. Clostridium thermoaceticum).</title>
        <authorList>
            <person name="Pierce E."/>
            <person name="Xie G."/>
            <person name="Barabote R.D."/>
            <person name="Saunders E."/>
            <person name="Han C.S."/>
            <person name="Detter J.C."/>
            <person name="Richardson P."/>
            <person name="Brettin T.S."/>
            <person name="Das A."/>
            <person name="Ljungdahl L.G."/>
            <person name="Ragsdale S.W."/>
        </authorList>
    </citation>
    <scope>NUCLEOTIDE SEQUENCE [LARGE SCALE GENOMIC DNA]</scope>
    <source>
        <strain>ATCC 39073 / JCM 9320</strain>
    </source>
</reference>
<sequence>MTYIPTTAAEQQQMLAACGAHRMEELFSDVPASVRLGRELNLPRPMAEAEVWRHLEELAGKNKKLVSFLGAGAYEHYIPSVVGHLLARSEFYTAYTPYQPEISQGTLQAIFEFQSLICELTGLDVATASHYDGATAMAEAALVACNATRRQKILVSRSVNPQYRTVLSTYAKGQGVELAEVPLQDGRTDLEALEKLAGKDVAGVILQNPNFFGQIEAMAEATDLAHKARALGIAVVDPVSLGLLAAPGEYGADLAVGEGQSLGNPLNFGGPYLGFIAAREKLVRRLPGRIVGQTKDVDGKRAYVLTLQAREQHIRREKATSNICSNEALCALAATIYLAAMGREGLKEVASQCLLKAHYAQKKLAALPGVTPVFNGPFFHEFVLQTKLSPATVARRLAENGFAAGFDLGRFYPELKNALLFTVTEVRTREEIDALVAAMRGILA</sequence>